<protein>
    <recommendedName>
        <fullName evidence="1">Cytochrome b559 subunit beta</fullName>
    </recommendedName>
    <alternativeName>
        <fullName evidence="1">PSII reaction center subunit VI</fullName>
    </alternativeName>
</protein>
<gene>
    <name evidence="1" type="primary">psbF</name>
    <name type="ordered locus">smr0006</name>
</gene>
<keyword id="KW-0002">3D-structure</keyword>
<keyword id="KW-0903">Direct protein sequencing</keyword>
<keyword id="KW-0249">Electron transport</keyword>
<keyword id="KW-0349">Heme</keyword>
<keyword id="KW-0408">Iron</keyword>
<keyword id="KW-0472">Membrane</keyword>
<keyword id="KW-0479">Metal-binding</keyword>
<keyword id="KW-0602">Photosynthesis</keyword>
<keyword id="KW-0604">Photosystem II</keyword>
<keyword id="KW-1185">Reference proteome</keyword>
<keyword id="KW-0793">Thylakoid</keyword>
<keyword id="KW-0812">Transmembrane</keyword>
<keyword id="KW-1133">Transmembrane helix</keyword>
<keyword id="KW-0813">Transport</keyword>
<sequence length="44" mass="4933">MATQNPNQPVTYPIFTVRWLAVHTLAVPSVFFVGAIAAMQFIQR</sequence>
<comment type="function">
    <text evidence="1 4">This b-type cytochrome is tightly associated with the reaction center of photosystem II (PSII). PSII is a light-driven water:plastoquinone oxidoreductase that uses light energy to abstract electrons from H(2)O, generating O(2) and a proton gradient subsequently used for ATP formation. It consists of a core antenna complex that captures photons, and an electron transfer chain that converts photonic excitation into a charge separation.</text>
</comment>
<comment type="cofactor">
    <cofactor evidence="1 4">
        <name>heme b</name>
        <dbReference type="ChEBI" id="CHEBI:60344"/>
    </cofactor>
    <text evidence="1 4">With its partner (PsbE) binds heme. PSII binds additional chlorophylls, carotenoids and specific lipids.</text>
</comment>
<comment type="subunit">
    <text evidence="1 2 4">Heterodimer of an alpha subunit and a beta subunit (PubMed:34937700). PSII is composed of 1 copy each of membrane proteins PsbA, PsbB, PsbC, PsbD, PsbE, PsbF, PsbH, PsbI, PsbJ, PsbK, PsbL, PsbM, PsbT, PsbX, PsbY, PsbZ, Psb30/Ycf12, peripheral proteins PsbO, CyanoQ (PsbQ), PsbU, PsbV and a large number of cofactors. It forms dimeric complexes (PubMed:34937700).</text>
</comment>
<comment type="interaction">
    <interactant intactId="EBI-701712">
        <id>P09191</id>
    </interactant>
    <interactant intactId="EBI-701712">
        <id>P09191</id>
        <label>psbF</label>
    </interactant>
    <organismsDiffer>false</organismsDiffer>
    <experiments>7</experiments>
</comment>
<comment type="subcellular location">
    <subcellularLocation>
        <location evidence="1 2 4">Cellular thylakoid membrane</location>
        <topology evidence="1 4">Single-pass membrane protein</topology>
    </subcellularLocation>
</comment>
<comment type="similarity">
    <text evidence="1">Belongs to the PsbE/PsbF family.</text>
</comment>
<proteinExistence type="evidence at protein level"/>
<accession>P09191</accession>
<name>PSBF_SYNY3</name>
<organism>
    <name type="scientific">Synechocystis sp. (strain ATCC 27184 / PCC 6803 / Kazusa)</name>
    <dbReference type="NCBI Taxonomy" id="1111708"/>
    <lineage>
        <taxon>Bacteria</taxon>
        <taxon>Bacillati</taxon>
        <taxon>Cyanobacteriota</taxon>
        <taxon>Cyanophyceae</taxon>
        <taxon>Synechococcales</taxon>
        <taxon>Merismopediaceae</taxon>
        <taxon>Synechocystis</taxon>
    </lineage>
</organism>
<evidence type="ECO:0000255" key="1">
    <source>
        <dbReference type="HAMAP-Rule" id="MF_00643"/>
    </source>
</evidence>
<evidence type="ECO:0000269" key="2">
    <source>
    </source>
</evidence>
<evidence type="ECO:0000269" key="3">
    <source>
    </source>
</evidence>
<evidence type="ECO:0000269" key="4">
    <source>
    </source>
</evidence>
<evidence type="ECO:0000305" key="5">
    <source>
    </source>
</evidence>
<evidence type="ECO:0000312" key="6">
    <source>
        <dbReference type="PDB" id="7N8O"/>
    </source>
</evidence>
<evidence type="ECO:0007744" key="7">
    <source>
        <dbReference type="PDB" id="7N8O"/>
    </source>
</evidence>
<evidence type="ECO:0007744" key="8">
    <source>
        <dbReference type="PDB" id="7RCV"/>
    </source>
</evidence>
<evidence type="ECO:0007829" key="9">
    <source>
        <dbReference type="PDB" id="7N8O"/>
    </source>
</evidence>
<feature type="initiator methionine" description="Removed" evidence="2">
    <location>
        <position position="1"/>
    </location>
</feature>
<feature type="chain" id="PRO_0000200478" description="Cytochrome b559 subunit beta">
    <location>
        <begin position="2"/>
        <end position="44"/>
    </location>
</feature>
<feature type="transmembrane region" description="Helical" evidence="4 6">
    <location>
        <begin position="17"/>
        <end position="41"/>
    </location>
</feature>
<feature type="binding site" evidence="4 6">
    <location>
        <position position="18"/>
    </location>
    <ligand>
        <name>heme</name>
        <dbReference type="ChEBI" id="CHEBI:30413"/>
        <note>ligand shared with alpha subunit</note>
    </ligand>
</feature>
<feature type="binding site" description="axial binding residue" evidence="1 4 5 6">
    <location>
        <position position="23"/>
    </location>
    <ligand>
        <name>heme</name>
        <dbReference type="ChEBI" id="CHEBI:30413"/>
        <note>ligand shared with alpha subunit</note>
    </ligand>
    <ligandPart>
        <name>Fe</name>
        <dbReference type="ChEBI" id="CHEBI:18248"/>
    </ligandPart>
</feature>
<feature type="mutagenesis site" description="Complete loss of PSII activity, decreased accumulation of PSII subunits, altered mobility of the PsbE subunit." evidence="3">
    <original>H</original>
    <variation>L</variation>
    <location>
        <position position="23"/>
    </location>
</feature>
<feature type="helix" evidence="9">
    <location>
        <begin position="17"/>
        <end position="39"/>
    </location>
</feature>
<reference key="1">
    <citation type="journal article" date="1988" name="EMBO J.">
        <title>Targeted mutagenesis of the psbE and psbF genes blocks photosynthetic electron transport: evidence for a functional role of cytochrome b559 in photosystem II.</title>
        <authorList>
            <person name="Pakrasi H.B."/>
            <person name="Williams J.G.K."/>
            <person name="Arntzen C.J."/>
        </authorList>
    </citation>
    <scope>NUCLEOTIDE SEQUENCE [GENOMIC DNA]</scope>
</reference>
<reference key="2">
    <citation type="journal article" date="1996" name="DNA Res.">
        <title>Sequence analysis of the genome of the unicellular cyanobacterium Synechocystis sp. strain PCC6803. II. Sequence determination of the entire genome and assignment of potential protein-coding regions.</title>
        <authorList>
            <person name="Kaneko T."/>
            <person name="Sato S."/>
            <person name="Kotani H."/>
            <person name="Tanaka A."/>
            <person name="Asamizu E."/>
            <person name="Nakamura Y."/>
            <person name="Miyajima N."/>
            <person name="Hirosawa M."/>
            <person name="Sugiura M."/>
            <person name="Sasamoto S."/>
            <person name="Kimura T."/>
            <person name="Hosouchi T."/>
            <person name="Matsuno A."/>
            <person name="Muraki A."/>
            <person name="Nakazaki N."/>
            <person name="Naruo K."/>
            <person name="Okumura S."/>
            <person name="Shimpo S."/>
            <person name="Takeuchi C."/>
            <person name="Wada T."/>
            <person name="Watanabe A."/>
            <person name="Yamada M."/>
            <person name="Yasuda M."/>
            <person name="Tabata S."/>
        </authorList>
    </citation>
    <scope>NUCLEOTIDE SEQUENCE [LARGE SCALE GENOMIC DNA]</scope>
    <source>
        <strain>ATCC 27184 / PCC 6803 / Kazusa</strain>
    </source>
</reference>
<reference key="3">
    <citation type="journal article" date="2002" name="Biochemistry">
        <title>Proteomic analysis of a highly active photosystem II preparation from the cyanobacterium Synechocystis sp. PCC 6803 reveals the presence of novel polypeptides.</title>
        <authorList>
            <person name="Kashino Y."/>
            <person name="Lauber W.M."/>
            <person name="Carroll J.A."/>
            <person name="Wang Q."/>
            <person name="Whitmarsh J."/>
            <person name="Satoh K."/>
            <person name="Pakrasi H.B."/>
        </authorList>
    </citation>
    <scope>PROTEIN SEQUENCE OF 2-14</scope>
    <scope>SUBUNIT</scope>
    <scope>SUBCELLULAR LOCATION</scope>
    <source>
        <strain>ATCC 27184 / PCC 6803 / Kazusa</strain>
    </source>
</reference>
<reference key="4">
    <citation type="journal article" date="1991" name="EMBO J.">
        <title>Site directed mutagenesis of the heme axial ligands of cytochrome b559 affects the stability of the photosystem II complex.</title>
        <authorList>
            <person name="Pakrasi H.B."/>
            <person name="de Ciechi P."/>
            <person name="Whitmarsh J."/>
        </authorList>
    </citation>
    <scope>MUTAGENESIS OF HIS-23</scope>
</reference>
<reference evidence="7 8" key="5">
    <citation type="journal article" date="2022" name="Proc. Natl. Acad. Sci. U.S.A.">
        <title>High-resolution cryo-electron microscopy structure of photosystem II from the mesophilic cyanobacterium, Synechocystis sp. PCC 6803.</title>
        <authorList>
            <person name="Gisriel C.J."/>
            <person name="Wang J."/>
            <person name="Liu J."/>
            <person name="Flesher D.A."/>
            <person name="Reiss K.M."/>
            <person name="Huang H.L."/>
            <person name="Yang K.R."/>
            <person name="Armstrong W.H."/>
            <person name="Gunner M.R."/>
            <person name="Batista V.S."/>
            <person name="Debus R.J."/>
            <person name="Brudvig G.W."/>
        </authorList>
    </citation>
    <scope>STRUCTURE BY ELECTRON MICROSCOPY (1.93 ANGSTROMS) OF 10-44</scope>
    <scope>FUNCTION</scope>
    <scope>COFACTOR</scope>
    <scope>SUBUNIT</scope>
    <scope>SUBCELLULAR LOCATION</scope>
    <source>
        <strain>ATCC 27184 / PCC 6803 / Kazusa</strain>
    </source>
</reference>
<dbReference type="EMBL" id="M33897">
    <property type="protein sequence ID" value="AAA27300.1"/>
    <property type="molecule type" value="Genomic_DNA"/>
</dbReference>
<dbReference type="EMBL" id="BA000022">
    <property type="protein sequence ID" value="BAA17093.1"/>
    <property type="molecule type" value="Genomic_DNA"/>
</dbReference>
<dbReference type="PIR" id="S00339">
    <property type="entry name" value="F2YB4"/>
</dbReference>
<dbReference type="PDB" id="6WJ6">
    <property type="method" value="EM"/>
    <property type="resolution" value="2.58 A"/>
    <property type="chains" value="F=1-44"/>
</dbReference>
<dbReference type="PDB" id="7N8O">
    <property type="method" value="EM"/>
    <property type="resolution" value="1.93 A"/>
    <property type="chains" value="F/f=10-44"/>
</dbReference>
<dbReference type="PDB" id="7RCV">
    <property type="method" value="EM"/>
    <property type="resolution" value="2.01 A"/>
    <property type="chains" value="F/f=10-44"/>
</dbReference>
<dbReference type="PDB" id="8AM5">
    <property type="method" value="EM"/>
    <property type="resolution" value="3.10 A"/>
    <property type="chains" value="F=1-44"/>
</dbReference>
<dbReference type="PDB" id="8ASL">
    <property type="method" value="EM"/>
    <property type="resolution" value="3.15 A"/>
    <property type="chains" value="F=1-44"/>
</dbReference>
<dbReference type="PDB" id="8TOW">
    <property type="method" value="EM"/>
    <property type="resolution" value="2.14 A"/>
    <property type="chains" value="F/f=1-44"/>
</dbReference>
<dbReference type="PDB" id="9EH5">
    <property type="method" value="EM"/>
    <property type="resolution" value="1.97 A"/>
    <property type="chains" value="F/f=1-44"/>
</dbReference>
<dbReference type="PDBsum" id="6WJ6"/>
<dbReference type="PDBsum" id="7N8O"/>
<dbReference type="PDBsum" id="7RCV"/>
<dbReference type="PDBsum" id="8AM5"/>
<dbReference type="PDBsum" id="8ASL"/>
<dbReference type="PDBsum" id="8TOW"/>
<dbReference type="PDBsum" id="9EH5"/>
<dbReference type="EMDB" id="EMD-15522"/>
<dbReference type="EMDB" id="EMD-15618"/>
<dbReference type="EMDB" id="EMD-21690"/>
<dbReference type="EMDB" id="EMD-24239"/>
<dbReference type="EMDB" id="EMD-24407"/>
<dbReference type="EMDB" id="EMD-41460"/>
<dbReference type="EMDB" id="EMD-48046"/>
<dbReference type="SMR" id="P09191"/>
<dbReference type="IntAct" id="P09191">
    <property type="interactions" value="2"/>
</dbReference>
<dbReference type="MINT" id="P09191"/>
<dbReference type="STRING" id="1148.gene:10497954"/>
<dbReference type="PaxDb" id="1148-1652169"/>
<dbReference type="EnsemblBacteria" id="BAA17093">
    <property type="protein sequence ID" value="BAA17093"/>
    <property type="gene ID" value="BAA17093"/>
</dbReference>
<dbReference type="KEGG" id="syn:smr0006"/>
<dbReference type="eggNOG" id="ENOG50332KX">
    <property type="taxonomic scope" value="Bacteria"/>
</dbReference>
<dbReference type="InParanoid" id="P09191"/>
<dbReference type="Proteomes" id="UP000001425">
    <property type="component" value="Chromosome"/>
</dbReference>
<dbReference type="GO" id="GO:0009539">
    <property type="term" value="C:photosystem II reaction center"/>
    <property type="evidence" value="ECO:0007669"/>
    <property type="project" value="InterPro"/>
</dbReference>
<dbReference type="GO" id="GO:0031676">
    <property type="term" value="C:plasma membrane-derived thylakoid membrane"/>
    <property type="evidence" value="ECO:0007669"/>
    <property type="project" value="UniProtKB-SubCell"/>
</dbReference>
<dbReference type="GO" id="GO:0030096">
    <property type="term" value="C:plasma membrane-derived thylakoid photosystem II"/>
    <property type="evidence" value="ECO:0000314"/>
    <property type="project" value="UniProtKB"/>
</dbReference>
<dbReference type="GO" id="GO:0009055">
    <property type="term" value="F:electron transfer activity"/>
    <property type="evidence" value="ECO:0007669"/>
    <property type="project" value="UniProtKB-UniRule"/>
</dbReference>
<dbReference type="GO" id="GO:0020037">
    <property type="term" value="F:heme binding"/>
    <property type="evidence" value="ECO:0007669"/>
    <property type="project" value="InterPro"/>
</dbReference>
<dbReference type="GO" id="GO:0042802">
    <property type="term" value="F:identical protein binding"/>
    <property type="evidence" value="ECO:0000353"/>
    <property type="project" value="IntAct"/>
</dbReference>
<dbReference type="GO" id="GO:0005506">
    <property type="term" value="F:iron ion binding"/>
    <property type="evidence" value="ECO:0007669"/>
    <property type="project" value="UniProtKB-UniRule"/>
</dbReference>
<dbReference type="GO" id="GO:0009767">
    <property type="term" value="P:photosynthetic electron transport chain"/>
    <property type="evidence" value="ECO:0007669"/>
    <property type="project" value="InterPro"/>
</dbReference>
<dbReference type="HAMAP" id="MF_00643">
    <property type="entry name" value="PSII_PsbF"/>
    <property type="match status" value="1"/>
</dbReference>
<dbReference type="InterPro" id="IPR006241">
    <property type="entry name" value="PSII_cyt_b559_bsu"/>
</dbReference>
<dbReference type="InterPro" id="IPR006216">
    <property type="entry name" value="PSII_cyt_b559_CS"/>
</dbReference>
<dbReference type="InterPro" id="IPR013081">
    <property type="entry name" value="PSII_cyt_b559_N"/>
</dbReference>
<dbReference type="NCBIfam" id="TIGR01333">
    <property type="entry name" value="cyt_b559_beta"/>
    <property type="match status" value="1"/>
</dbReference>
<dbReference type="Pfam" id="PF00283">
    <property type="entry name" value="Cytochrom_B559"/>
    <property type="match status" value="1"/>
</dbReference>
<dbReference type="PIRSF" id="PIRSF000037">
    <property type="entry name" value="PsbF"/>
    <property type="match status" value="1"/>
</dbReference>
<dbReference type="SUPFAM" id="SSF161045">
    <property type="entry name" value="Cytochrome b559 subunits"/>
    <property type="match status" value="1"/>
</dbReference>
<dbReference type="PROSITE" id="PS00537">
    <property type="entry name" value="CYTOCHROME_B559"/>
    <property type="match status" value="1"/>
</dbReference>